<gene>
    <name type="primary">NXNL1</name>
    <name type="synonym">TXNL6</name>
</gene>
<protein>
    <recommendedName>
        <fullName>Nucleoredoxin-like protein 1</fullName>
    </recommendedName>
    <alternativeName>
        <fullName>Thioredoxin-like protein 6</fullName>
    </alternativeName>
</protein>
<proteinExistence type="evidence at protein level"/>
<dbReference type="EMBL" id="CH471106">
    <property type="protein sequence ID" value="EAW84608.1"/>
    <property type="molecule type" value="Genomic_DNA"/>
</dbReference>
<dbReference type="EMBL" id="BC014127">
    <property type="protein sequence ID" value="AAH14127.1"/>
    <property type="molecule type" value="mRNA"/>
</dbReference>
<dbReference type="EMBL" id="DQ426894">
    <property type="protein sequence ID" value="ABD90545.1"/>
    <property type="molecule type" value="mRNA"/>
</dbReference>
<dbReference type="CCDS" id="CCDS12360.1"/>
<dbReference type="RefSeq" id="NP_612463.1">
    <property type="nucleotide sequence ID" value="NM_138454.2"/>
</dbReference>
<dbReference type="SMR" id="Q96CM4"/>
<dbReference type="BioGRID" id="125460">
    <property type="interactions" value="4"/>
</dbReference>
<dbReference type="FunCoup" id="Q96CM4">
    <property type="interactions" value="5"/>
</dbReference>
<dbReference type="IntAct" id="Q96CM4">
    <property type="interactions" value="4"/>
</dbReference>
<dbReference type="STRING" id="9606.ENSP00000305631"/>
<dbReference type="iPTMnet" id="Q96CM4"/>
<dbReference type="PhosphoSitePlus" id="Q96CM4"/>
<dbReference type="BioMuta" id="NXNL1"/>
<dbReference type="DMDM" id="74731355"/>
<dbReference type="jPOST" id="Q96CM4"/>
<dbReference type="MassIVE" id="Q96CM4"/>
<dbReference type="PaxDb" id="9606-ENSP00000305631"/>
<dbReference type="PeptideAtlas" id="Q96CM4"/>
<dbReference type="ProteomicsDB" id="76193"/>
<dbReference type="Antibodypedia" id="27693">
    <property type="antibodies" value="137 antibodies from 22 providers"/>
</dbReference>
<dbReference type="DNASU" id="115861"/>
<dbReference type="Ensembl" id="ENST00000301944.3">
    <property type="protein sequence ID" value="ENSP00000305631.2"/>
    <property type="gene ID" value="ENSG00000171773.3"/>
</dbReference>
<dbReference type="GeneID" id="115861"/>
<dbReference type="KEGG" id="hsa:115861"/>
<dbReference type="MANE-Select" id="ENST00000301944.3">
    <property type="protein sequence ID" value="ENSP00000305631.2"/>
    <property type="RefSeq nucleotide sequence ID" value="NM_138454.2"/>
    <property type="RefSeq protein sequence ID" value="NP_612463.1"/>
</dbReference>
<dbReference type="UCSC" id="uc002ngs.4">
    <property type="organism name" value="human"/>
</dbReference>
<dbReference type="AGR" id="HGNC:25179"/>
<dbReference type="CTD" id="115861"/>
<dbReference type="DisGeNET" id="115861"/>
<dbReference type="GeneCards" id="NXNL1"/>
<dbReference type="HGNC" id="HGNC:25179">
    <property type="gene designation" value="NXNL1"/>
</dbReference>
<dbReference type="HPA" id="ENSG00000171773">
    <property type="expression patterns" value="Group enriched (choroid plexus, retina)"/>
</dbReference>
<dbReference type="MalaCards" id="NXNL1"/>
<dbReference type="MIM" id="608791">
    <property type="type" value="gene"/>
</dbReference>
<dbReference type="neXtProt" id="NX_Q96CM4"/>
<dbReference type="OpenTargets" id="ENSG00000171773"/>
<dbReference type="PharmGKB" id="PA162398383"/>
<dbReference type="VEuPathDB" id="HostDB:ENSG00000171773"/>
<dbReference type="eggNOG" id="KOG2501">
    <property type="taxonomic scope" value="Eukaryota"/>
</dbReference>
<dbReference type="GeneTree" id="ENSGT00940000161246"/>
<dbReference type="HOGENOM" id="CLU_116457_0_0_1"/>
<dbReference type="InParanoid" id="Q96CM4"/>
<dbReference type="OMA" id="KTMPKRW"/>
<dbReference type="OrthoDB" id="189920at2759"/>
<dbReference type="PAN-GO" id="Q96CM4">
    <property type="GO annotations" value="0 GO annotations based on evolutionary models"/>
</dbReference>
<dbReference type="PhylomeDB" id="Q96CM4"/>
<dbReference type="TreeFam" id="TF331873"/>
<dbReference type="PathwayCommons" id="Q96CM4"/>
<dbReference type="SignaLink" id="Q96CM4"/>
<dbReference type="BioGRID-ORCS" id="115861">
    <property type="hits" value="22 hits in 1149 CRISPR screens"/>
</dbReference>
<dbReference type="GenomeRNAi" id="115861"/>
<dbReference type="Pharos" id="Q96CM4">
    <property type="development level" value="Tbio"/>
</dbReference>
<dbReference type="PRO" id="PR:Q96CM4"/>
<dbReference type="Proteomes" id="UP000005640">
    <property type="component" value="Chromosome 19"/>
</dbReference>
<dbReference type="RNAct" id="Q96CM4">
    <property type="molecule type" value="protein"/>
</dbReference>
<dbReference type="Bgee" id="ENSG00000171773">
    <property type="expression patterns" value="Expressed in primordial germ cell in gonad and 71 other cell types or tissues"/>
</dbReference>
<dbReference type="GO" id="GO:0001750">
    <property type="term" value="C:photoreceptor outer segment"/>
    <property type="evidence" value="ECO:0007669"/>
    <property type="project" value="UniProtKB-SubCell"/>
</dbReference>
<dbReference type="GO" id="GO:0048018">
    <property type="term" value="F:receptor ligand activity"/>
    <property type="evidence" value="ECO:0000314"/>
    <property type="project" value="UniProt"/>
</dbReference>
<dbReference type="GO" id="GO:0045494">
    <property type="term" value="P:photoreceptor cell maintenance"/>
    <property type="evidence" value="ECO:0000314"/>
    <property type="project" value="UniProt"/>
</dbReference>
<dbReference type="CDD" id="cd03008">
    <property type="entry name" value="TryX_like_RdCVF"/>
    <property type="match status" value="1"/>
</dbReference>
<dbReference type="Gene3D" id="3.40.30.10">
    <property type="entry name" value="Glutaredoxin"/>
    <property type="match status" value="1"/>
</dbReference>
<dbReference type="InterPro" id="IPR029520">
    <property type="entry name" value="RdCVF"/>
</dbReference>
<dbReference type="InterPro" id="IPR012336">
    <property type="entry name" value="Thioredoxin-like_fold"/>
</dbReference>
<dbReference type="InterPro" id="IPR036249">
    <property type="entry name" value="Thioredoxin-like_sf"/>
</dbReference>
<dbReference type="InterPro" id="IPR013766">
    <property type="entry name" value="Thioredoxin_domain"/>
</dbReference>
<dbReference type="PANTHER" id="PTHR47109">
    <property type="entry name" value="NUCLEOREDOXIN-LIKE PROTEIN 1"/>
    <property type="match status" value="1"/>
</dbReference>
<dbReference type="PANTHER" id="PTHR47109:SF1">
    <property type="entry name" value="NUCLEOREDOXIN-LIKE PROTEIN 1"/>
    <property type="match status" value="1"/>
</dbReference>
<dbReference type="Pfam" id="PF13905">
    <property type="entry name" value="Thioredoxin_8"/>
    <property type="match status" value="1"/>
</dbReference>
<dbReference type="SUPFAM" id="SSF52833">
    <property type="entry name" value="Thioredoxin-like"/>
    <property type="match status" value="1"/>
</dbReference>
<dbReference type="PROSITE" id="PS51352">
    <property type="entry name" value="THIOREDOXIN_2"/>
    <property type="match status" value="1"/>
</dbReference>
<reference key="1">
    <citation type="submission" date="2005-07" db="EMBL/GenBank/DDBJ databases">
        <authorList>
            <person name="Mural R.J."/>
            <person name="Istrail S."/>
            <person name="Sutton G.G."/>
            <person name="Florea L."/>
            <person name="Halpern A.L."/>
            <person name="Mobarry C.M."/>
            <person name="Lippert R."/>
            <person name="Walenz B."/>
            <person name="Shatkay H."/>
            <person name="Dew I."/>
            <person name="Miller J.R."/>
            <person name="Flanigan M.J."/>
            <person name="Edwards N.J."/>
            <person name="Bolanos R."/>
            <person name="Fasulo D."/>
            <person name="Halldorsson B.V."/>
            <person name="Hannenhalli S."/>
            <person name="Turner R."/>
            <person name="Yooseph S."/>
            <person name="Lu F."/>
            <person name="Nusskern D.R."/>
            <person name="Shue B.C."/>
            <person name="Zheng X.H."/>
            <person name="Zhong F."/>
            <person name="Delcher A.L."/>
            <person name="Huson D.H."/>
            <person name="Kravitz S.A."/>
            <person name="Mouchard L."/>
            <person name="Reinert K."/>
            <person name="Remington K.A."/>
            <person name="Clark A.G."/>
            <person name="Waterman M.S."/>
            <person name="Eichler E.E."/>
            <person name="Adams M.D."/>
            <person name="Hunkapiller M.W."/>
            <person name="Myers E.W."/>
            <person name="Venter J.C."/>
        </authorList>
    </citation>
    <scope>NUCLEOTIDE SEQUENCE [LARGE SCALE GENOMIC DNA]</scope>
</reference>
<reference key="2">
    <citation type="journal article" date="2004" name="Genome Res.">
        <title>The status, quality, and expansion of the NIH full-length cDNA project: the Mammalian Gene Collection (MGC).</title>
        <authorList>
            <consortium name="The MGC Project Team"/>
        </authorList>
    </citation>
    <scope>NUCLEOTIDE SEQUENCE [LARGE SCALE MRNA]</scope>
    <source>
        <tissue>Eye</tissue>
    </source>
</reference>
<reference key="3">
    <citation type="journal article" date="2007" name="BMC Genomics">
        <title>Mapping of transcription start sites of human retina expressed genes.</title>
        <authorList>
            <person name="Roni V."/>
            <person name="Carpio R."/>
            <person name="Wissinger B."/>
        </authorList>
    </citation>
    <scope>NUCLEOTIDE SEQUENCE [LARGE SCALE MRNA] OF 1-19</scope>
    <source>
        <tissue>Retina</tissue>
    </source>
</reference>
<reference key="4">
    <citation type="journal article" date="2015" name="Cell">
        <title>Rod-derived cone viability factor promotes cone survival by stimulating aerobic glycolysis.</title>
        <authorList>
            <person name="Ait-Ali N."/>
            <person name="Fridlich R."/>
            <person name="Millet-Puel G."/>
            <person name="Clerin E."/>
            <person name="Delalande F."/>
            <person name="Jaillard C."/>
            <person name="Blond F."/>
            <person name="Perrocheau L."/>
            <person name="Reichman S."/>
            <person name="Byrne L.C."/>
            <person name="Olivier-Bandini A."/>
            <person name="Bellalou J."/>
            <person name="Moyse E."/>
            <person name="Bouillaud F."/>
            <person name="Nicol X."/>
            <person name="Dalkara D."/>
            <person name="van Dorsselaer A."/>
            <person name="Sahel J.A."/>
            <person name="Leveillard T."/>
        </authorList>
    </citation>
    <scope>CHARACTERIZATION OF VARIANT LYS-64</scope>
    <scope>FUNCTION</scope>
    <scope>INTERACTION WITH BSG</scope>
</reference>
<reference key="5">
    <citation type="journal article" date="2006" name="Adv. Exp. Med. Biol.">
        <title>Disease-associated variants of the rod-derived cone viability factor (RdCVF) in Leber congenital amaurosis. Rod-derived cone viability variants in LCA.</title>
        <authorList>
            <person name="Hanein S."/>
            <person name="Perrault I."/>
            <person name="Gerber S."/>
            <person name="Dollfus H."/>
            <person name="Dufier J.L."/>
            <person name="Feingold J."/>
            <person name="Munnich A."/>
            <person name="Bhattacharya S."/>
            <person name="Kaplan J."/>
            <person name="Sahel J.A."/>
            <person name="Rozet J.M."/>
            <person name="Leveillard T."/>
        </authorList>
    </citation>
    <scope>VARIANTS ASN-18; LYS-64; ARG-92; ILE-94; TRP-112; SER-162 AND ILE-178</scope>
</reference>
<comment type="function">
    <text evidence="1 5">Plays an important role in retinal cone photoreceptor survival (PubMed:25957687). In association with glucose transporter SLC16A1/GLUT1 and BSG, promotes retinal cone survival by enhancing aerobic glycolysis and accelerating the entry of glucose into photoreceptors (PubMed:25957687). May play a role in cone cell viability, slowing down cone degeneration, does not seem to play a role in degenerating rods (By similarity).</text>
</comment>
<comment type="subunit">
    <text evidence="5">Interacts with isoform 1 of BSG.</text>
</comment>
<comment type="subcellular location">
    <subcellularLocation>
        <location evidence="1">Cell projection</location>
        <location evidence="1">Cilium</location>
        <location evidence="1">Photoreceptor outer segment</location>
    </subcellularLocation>
</comment>
<comment type="similarity">
    <text evidence="6">Belongs to the nucleoredoxin family.</text>
</comment>
<name>NXNL1_HUMAN</name>
<sequence>MASLFSGRILIRNNSDQDELDTEAEVSRRLENRLVLLFFGAGACPQCQAFVPILKDFFVRLTDEFYVLRAAQLALVYVSQDSTEEQQDLFLKDMPKKWLFLPFEDDLRRDLGRQFSVERLPAVVVLKPDGDVLTRDGADEIQRLGTACFANWQEAAEVLDRNFQLPEDLEDQEPRSLTECLRRHKYRVEKAARGGRDPGGGGGEEGGAGGLF</sequence>
<evidence type="ECO:0000250" key="1">
    <source>
        <dbReference type="UniProtKB" id="Q8VC33"/>
    </source>
</evidence>
<evidence type="ECO:0000255" key="2">
    <source>
        <dbReference type="PROSITE-ProRule" id="PRU00691"/>
    </source>
</evidence>
<evidence type="ECO:0000256" key="3">
    <source>
        <dbReference type="SAM" id="MobiDB-lite"/>
    </source>
</evidence>
<evidence type="ECO:0000269" key="4">
    <source>
    </source>
</evidence>
<evidence type="ECO:0000269" key="5">
    <source>
    </source>
</evidence>
<evidence type="ECO:0000305" key="6"/>
<organism>
    <name type="scientific">Homo sapiens</name>
    <name type="common">Human</name>
    <dbReference type="NCBI Taxonomy" id="9606"/>
    <lineage>
        <taxon>Eukaryota</taxon>
        <taxon>Metazoa</taxon>
        <taxon>Chordata</taxon>
        <taxon>Craniata</taxon>
        <taxon>Vertebrata</taxon>
        <taxon>Euteleostomi</taxon>
        <taxon>Mammalia</taxon>
        <taxon>Eutheria</taxon>
        <taxon>Euarchontoglires</taxon>
        <taxon>Primates</taxon>
        <taxon>Haplorrhini</taxon>
        <taxon>Catarrhini</taxon>
        <taxon>Hominidae</taxon>
        <taxon>Homo</taxon>
    </lineage>
</organism>
<feature type="chain" id="PRO_0000319543" description="Nucleoredoxin-like protein 1">
    <location>
        <begin position="1"/>
        <end position="212"/>
    </location>
</feature>
<feature type="domain" description="Thioredoxin" evidence="2">
    <location>
        <begin position="1"/>
        <end position="164"/>
    </location>
</feature>
<feature type="region of interest" description="Disordered" evidence="3">
    <location>
        <begin position="191"/>
        <end position="212"/>
    </location>
</feature>
<feature type="compositionally biased region" description="Gly residues" evidence="3">
    <location>
        <begin position="197"/>
        <end position="212"/>
    </location>
</feature>
<feature type="sequence variant" id="VAR_083662" description="In dbSNP:rs773261846." evidence="4">
    <original>D</original>
    <variation>N</variation>
    <location>
        <position position="18"/>
    </location>
</feature>
<feature type="sequence variant" id="VAR_083663" description="In a patient with retinal dytrophy; uncertain significance; loss of interaction with BSG; loss of ability to sustain retinal cone survival; dbSNP:rs150719211." evidence="4 5">
    <original>E</original>
    <variation>K</variation>
    <location>
        <position position="64"/>
    </location>
</feature>
<feature type="sequence variant" id="VAR_083664" description="In dbSNP:rs201992877." evidence="4">
    <original>K</original>
    <variation>R</variation>
    <location>
        <position position="92"/>
    </location>
</feature>
<feature type="sequence variant" id="VAR_083665" description="In dbSNP:rs145106863." evidence="4">
    <original>M</original>
    <variation>I</variation>
    <location>
        <position position="94"/>
    </location>
</feature>
<feature type="sequence variant" id="VAR_083666" evidence="4">
    <original>G</original>
    <variation>W</variation>
    <location>
        <position position="112"/>
    </location>
</feature>
<feature type="sequence variant" id="VAR_083667" description="In dbSNP:rs10408265." evidence="4">
    <original>N</original>
    <variation>S</variation>
    <location>
        <position position="162"/>
    </location>
</feature>
<feature type="sequence variant" id="VAR_083668" description="In dbSNP:rs56084515." evidence="4">
    <original>T</original>
    <variation>I</variation>
    <location>
        <position position="178"/>
    </location>
</feature>
<keyword id="KW-0966">Cell projection</keyword>
<keyword id="KW-1267">Proteomics identification</keyword>
<keyword id="KW-1185">Reference proteome</keyword>
<accession>Q96CM4</accession>
<accession>Q0QD37</accession>